<gene>
    <name evidence="14" type="primary">car</name>
    <name evidence="14" type="synonym">Vps33A</name>
    <name evidence="14" type="ORF">CG12230</name>
</gene>
<feature type="chain" id="PRO_0000206308" description="Vacuolar protein sorting-associated protein 33A">
    <location>
        <begin position="1"/>
        <end position="617"/>
    </location>
</feature>
<feature type="region of interest" description="Disordered" evidence="1">
    <location>
        <begin position="268"/>
        <end position="287"/>
    </location>
</feature>
<feature type="mutagenesis site" description="In car-1; irregular clustering of early endosomes; when associated with V-249." evidence="4">
    <original>L</original>
    <variation>V</variation>
    <location>
        <position position="26"/>
    </location>
</feature>
<feature type="mutagenesis site" description="In car-1; irregular clustering of early endosomes; when associated with V-26." evidence="4">
    <original>G</original>
    <variation>V</variation>
    <location>
        <position position="249"/>
    </location>
</feature>
<reference evidence="12" key="1">
    <citation type="journal article" date="1999" name="Mol. Cell">
        <title>A role for the deep orange and carnation eye color genes in lysosomal delivery in Drosophila.</title>
        <authorList>
            <person name="Sevrioukov E.A."/>
            <person name="He J.-P."/>
            <person name="Moghrabi N."/>
            <person name="Sunio A."/>
            <person name="Kraemer H."/>
        </authorList>
    </citation>
    <scope>NUCLEOTIDE SEQUENCE [MRNA]</scope>
    <scope>FUNCTION</scope>
    <scope>INTERACTION WITH DOR</scope>
    <scope>SUBCELLULAR LOCATION</scope>
    <scope>DISRUPTION PHENOTYPE</scope>
</reference>
<reference evidence="15" key="2">
    <citation type="journal article" date="2000" name="Science">
        <title>The genome sequence of Drosophila melanogaster.</title>
        <authorList>
            <person name="Adams M.D."/>
            <person name="Celniker S.E."/>
            <person name="Holt R.A."/>
            <person name="Evans C.A."/>
            <person name="Gocayne J.D."/>
            <person name="Amanatides P.G."/>
            <person name="Scherer S.E."/>
            <person name="Li P.W."/>
            <person name="Hoskins R.A."/>
            <person name="Galle R.F."/>
            <person name="George R.A."/>
            <person name="Lewis S.E."/>
            <person name="Richards S."/>
            <person name="Ashburner M."/>
            <person name="Henderson S.N."/>
            <person name="Sutton G.G."/>
            <person name="Wortman J.R."/>
            <person name="Yandell M.D."/>
            <person name="Zhang Q."/>
            <person name="Chen L.X."/>
            <person name="Brandon R.C."/>
            <person name="Rogers Y.-H.C."/>
            <person name="Blazej R.G."/>
            <person name="Champe M."/>
            <person name="Pfeiffer B.D."/>
            <person name="Wan K.H."/>
            <person name="Doyle C."/>
            <person name="Baxter E.G."/>
            <person name="Helt G."/>
            <person name="Nelson C.R."/>
            <person name="Miklos G.L.G."/>
            <person name="Abril J.F."/>
            <person name="Agbayani A."/>
            <person name="An H.-J."/>
            <person name="Andrews-Pfannkoch C."/>
            <person name="Baldwin D."/>
            <person name="Ballew R.M."/>
            <person name="Basu A."/>
            <person name="Baxendale J."/>
            <person name="Bayraktaroglu L."/>
            <person name="Beasley E.M."/>
            <person name="Beeson K.Y."/>
            <person name="Benos P.V."/>
            <person name="Berman B.P."/>
            <person name="Bhandari D."/>
            <person name="Bolshakov S."/>
            <person name="Borkova D."/>
            <person name="Botchan M.R."/>
            <person name="Bouck J."/>
            <person name="Brokstein P."/>
            <person name="Brottier P."/>
            <person name="Burtis K.C."/>
            <person name="Busam D.A."/>
            <person name="Butler H."/>
            <person name="Cadieu E."/>
            <person name="Center A."/>
            <person name="Chandra I."/>
            <person name="Cherry J.M."/>
            <person name="Cawley S."/>
            <person name="Dahlke C."/>
            <person name="Davenport L.B."/>
            <person name="Davies P."/>
            <person name="de Pablos B."/>
            <person name="Delcher A."/>
            <person name="Deng Z."/>
            <person name="Mays A.D."/>
            <person name="Dew I."/>
            <person name="Dietz S.M."/>
            <person name="Dodson K."/>
            <person name="Doup L.E."/>
            <person name="Downes M."/>
            <person name="Dugan-Rocha S."/>
            <person name="Dunkov B.C."/>
            <person name="Dunn P."/>
            <person name="Durbin K.J."/>
            <person name="Evangelista C.C."/>
            <person name="Ferraz C."/>
            <person name="Ferriera S."/>
            <person name="Fleischmann W."/>
            <person name="Fosler C."/>
            <person name="Gabrielian A.E."/>
            <person name="Garg N.S."/>
            <person name="Gelbart W.M."/>
            <person name="Glasser K."/>
            <person name="Glodek A."/>
            <person name="Gong F."/>
            <person name="Gorrell J.H."/>
            <person name="Gu Z."/>
            <person name="Guan P."/>
            <person name="Harris M."/>
            <person name="Harris N.L."/>
            <person name="Harvey D.A."/>
            <person name="Heiman T.J."/>
            <person name="Hernandez J.R."/>
            <person name="Houck J."/>
            <person name="Hostin D."/>
            <person name="Houston K.A."/>
            <person name="Howland T.J."/>
            <person name="Wei M.-H."/>
            <person name="Ibegwam C."/>
            <person name="Jalali M."/>
            <person name="Kalush F."/>
            <person name="Karpen G.H."/>
            <person name="Ke Z."/>
            <person name="Kennison J.A."/>
            <person name="Ketchum K.A."/>
            <person name="Kimmel B.E."/>
            <person name="Kodira C.D."/>
            <person name="Kraft C.L."/>
            <person name="Kravitz S."/>
            <person name="Kulp D."/>
            <person name="Lai Z."/>
            <person name="Lasko P."/>
            <person name="Lei Y."/>
            <person name="Levitsky A.A."/>
            <person name="Li J.H."/>
            <person name="Li Z."/>
            <person name="Liang Y."/>
            <person name="Lin X."/>
            <person name="Liu X."/>
            <person name="Mattei B."/>
            <person name="McIntosh T.C."/>
            <person name="McLeod M.P."/>
            <person name="McPherson D."/>
            <person name="Merkulov G."/>
            <person name="Milshina N.V."/>
            <person name="Mobarry C."/>
            <person name="Morris J."/>
            <person name="Moshrefi A."/>
            <person name="Mount S.M."/>
            <person name="Moy M."/>
            <person name="Murphy B."/>
            <person name="Murphy L."/>
            <person name="Muzny D.M."/>
            <person name="Nelson D.L."/>
            <person name="Nelson D.R."/>
            <person name="Nelson K.A."/>
            <person name="Nixon K."/>
            <person name="Nusskern D.R."/>
            <person name="Pacleb J.M."/>
            <person name="Palazzolo M."/>
            <person name="Pittman G.S."/>
            <person name="Pan S."/>
            <person name="Pollard J."/>
            <person name="Puri V."/>
            <person name="Reese M.G."/>
            <person name="Reinert K."/>
            <person name="Remington K."/>
            <person name="Saunders R.D.C."/>
            <person name="Scheeler F."/>
            <person name="Shen H."/>
            <person name="Shue B.C."/>
            <person name="Siden-Kiamos I."/>
            <person name="Simpson M."/>
            <person name="Skupski M.P."/>
            <person name="Smith T.J."/>
            <person name="Spier E."/>
            <person name="Spradling A.C."/>
            <person name="Stapleton M."/>
            <person name="Strong R."/>
            <person name="Sun E."/>
            <person name="Svirskas R."/>
            <person name="Tector C."/>
            <person name="Turner R."/>
            <person name="Venter E."/>
            <person name="Wang A.H."/>
            <person name="Wang X."/>
            <person name="Wang Z.-Y."/>
            <person name="Wassarman D.A."/>
            <person name="Weinstock G.M."/>
            <person name="Weissenbach J."/>
            <person name="Williams S.M."/>
            <person name="Woodage T."/>
            <person name="Worley K.C."/>
            <person name="Wu D."/>
            <person name="Yang S."/>
            <person name="Yao Q.A."/>
            <person name="Ye J."/>
            <person name="Yeh R.-F."/>
            <person name="Zaveri J.S."/>
            <person name="Zhan M."/>
            <person name="Zhang G."/>
            <person name="Zhao Q."/>
            <person name="Zheng L."/>
            <person name="Zheng X.H."/>
            <person name="Zhong F.N."/>
            <person name="Zhong W."/>
            <person name="Zhou X."/>
            <person name="Zhu S.C."/>
            <person name="Zhu X."/>
            <person name="Smith H.O."/>
            <person name="Gibbs R.A."/>
            <person name="Myers E.W."/>
            <person name="Rubin G.M."/>
            <person name="Venter J.C."/>
        </authorList>
    </citation>
    <scope>NUCLEOTIDE SEQUENCE [LARGE SCALE GENOMIC DNA]</scope>
    <source>
        <strain evidence="15">Berkeley</strain>
    </source>
</reference>
<reference evidence="15" key="3">
    <citation type="journal article" date="2002" name="Genome Biol.">
        <title>Annotation of the Drosophila melanogaster euchromatic genome: a systematic review.</title>
        <authorList>
            <person name="Misra S."/>
            <person name="Crosby M.A."/>
            <person name="Mungall C.J."/>
            <person name="Matthews B.B."/>
            <person name="Campbell K.S."/>
            <person name="Hradecky P."/>
            <person name="Huang Y."/>
            <person name="Kaminker J.S."/>
            <person name="Millburn G.H."/>
            <person name="Prochnik S.E."/>
            <person name="Smith C.D."/>
            <person name="Tupy J.L."/>
            <person name="Whitfield E.J."/>
            <person name="Bayraktaroglu L."/>
            <person name="Berman B.P."/>
            <person name="Bettencourt B.R."/>
            <person name="Celniker S.E."/>
            <person name="de Grey A.D.N.J."/>
            <person name="Drysdale R.A."/>
            <person name="Harris N.L."/>
            <person name="Richter J."/>
            <person name="Russo S."/>
            <person name="Schroeder A.J."/>
            <person name="Shu S.Q."/>
            <person name="Stapleton M."/>
            <person name="Yamada C."/>
            <person name="Ashburner M."/>
            <person name="Gelbart W.M."/>
            <person name="Rubin G.M."/>
            <person name="Lewis S.E."/>
        </authorList>
    </citation>
    <scope>GENOME REANNOTATION</scope>
    <source>
        <strain evidence="15">Berkeley</strain>
    </source>
</reference>
<reference evidence="13" key="4">
    <citation type="journal article" date="2002" name="Genome Biol.">
        <title>A Drosophila full-length cDNA resource.</title>
        <authorList>
            <person name="Stapleton M."/>
            <person name="Carlson J.W."/>
            <person name="Brokstein P."/>
            <person name="Yu C."/>
            <person name="Champe M."/>
            <person name="George R.A."/>
            <person name="Guarin H."/>
            <person name="Kronmiller B."/>
            <person name="Pacleb J.M."/>
            <person name="Park S."/>
            <person name="Wan K.H."/>
            <person name="Rubin G.M."/>
            <person name="Celniker S.E."/>
        </authorList>
    </citation>
    <scope>NUCLEOTIDE SEQUENCE [LARGE SCALE MRNA]</scope>
    <source>
        <strain evidence="13">Berkeley</strain>
        <tissue evidence="13">Embryo</tissue>
    </source>
</reference>
<reference key="5">
    <citation type="journal article" date="2010" name="J. Cell Biol.">
        <title>The novel endosomal membrane protein Ema interacts with the class C Vps-HOPS complex to promote endosomal maturation.</title>
        <authorList>
            <person name="Kim S."/>
            <person name="Wairkar Y.P."/>
            <person name="Daniels R.W."/>
            <person name="DiAntonio A."/>
        </authorList>
    </citation>
    <scope>INTERACTION WITH EMA</scope>
</reference>
<reference key="6">
    <citation type="journal article" date="2012" name="Mol. Biol. Cell">
        <title>The phosphoinositide-associated protein Rush hour regulates endosomal trafficking in Drosophila.</title>
        <authorList>
            <person name="Gailite I."/>
            <person name="Egger-Adam D."/>
            <person name="Wodarz A."/>
        </authorList>
    </citation>
    <scope>MUTAGENESIS OF LEU-26 AND GLY-249</scope>
    <scope>FUNCTION</scope>
</reference>
<reference key="7">
    <citation type="journal article" date="2014" name="Mol. Biol. Cell">
        <title>Interaction of the HOPS complex with Syntaxin 17 mediates autophagosome clearance in Drosophila.</title>
        <authorList>
            <person name="Takats S."/>
            <person name="Pircs K."/>
            <person name="Nagy P."/>
            <person name="Varga A."/>
            <person name="Karpati M."/>
            <person name="Hegedus K."/>
            <person name="Kramer H."/>
            <person name="Kovacs A.L."/>
            <person name="Sass M."/>
            <person name="Juhasz G."/>
        </authorList>
    </citation>
    <scope>FUNCTION</scope>
    <scope>INTERACTION WITH SYX17</scope>
    <scope>DISRUPTION PHENOTYPE</scope>
</reference>
<reference key="8">
    <citation type="journal article" date="2016" name="Elife">
        <title>MiniCORVET is a Vps8-containing early endosomal tether in Drosophila.</title>
        <authorList>
            <person name="Lorincz P."/>
            <person name="Lakatos Z."/>
            <person name="Varga A."/>
            <person name="Maruzs T."/>
            <person name="Simon-Vecsei Z."/>
            <person name="Darula Z."/>
            <person name="Benko P."/>
            <person name="Csordas G."/>
            <person name="Lippai M."/>
            <person name="Ando I."/>
            <person name="Hegedus K."/>
            <person name="Medzihradszky K.F."/>
            <person name="Takats S."/>
            <person name="Juhasz G."/>
        </authorList>
    </citation>
    <scope>FUNCTION</scope>
    <scope>IDENTIFICATION IN THE CORVET COMPLEX</scope>
    <scope>SUBCELLULAR LOCATION</scope>
    <scope>DEVELOPMENTAL STAGE</scope>
    <scope>DISRUPTION PHENOTYPE</scope>
    <scope>IDENTIFICATION BY MASS SPECTROMETRY</scope>
</reference>
<reference key="9">
    <citation type="journal article" date="2019" name="Elife">
        <title>Vps8 overexpression inhibits HOPS-dependent trafficking routes by outcompeting Vps41/Lt.</title>
        <authorList>
            <person name="Lorincz P."/>
            <person name="Kenez L.A."/>
            <person name="Toth S."/>
            <person name="Kiss V."/>
            <person name="Varga A."/>
            <person name="Csizmadia T."/>
            <person name="Simon-Vecsei Z."/>
            <person name="Juhasz G."/>
        </authorList>
    </citation>
    <scope>FUNCTION</scope>
    <scope>IDENTIFICATION IN THE HOPS COMPLEX</scope>
</reference>
<sequence>MFPHLKGHGQRVNLQLLQEAACRELLQQLDRIEGSKVIVLDETMIGPLDLVTRPKLFADRGIRLLALKPELHLPREVANVVYVMRPRVALMEQLAAHVKAGGRAAAGRQYHILFAPRRSCLCVSQLEVSGVLGSFGNIEELAWNYLPLDVDLVSMEMPNAFRDVSVDGDTSSLYQAAVGLVQLQRLYGRIPKIYGKGEFAHRVWEHAKQLGRDERTLYNGDKGVVDQLILLDRSIDLLSPLATQLTYEGLIDEFYGIRQNKLTLPAENFPSDGALPGGGGSGPRVEESQSLLGDTEKKTILLHSGEQLYAELRNKHFNEVTKLLARKAREIHVQMHATSQDKSVQEIKSFVENLLPQLMAQKKATSEHTAIAGLLHEQVNAVRFADDLAAEQEFMVCADIDKPSAYIEDLIACRVELNRVLRLICMQCHAASGFKEKLLNHYKRELVHVYGLEVLLTISNLEKSGLLHLQTESRAYSVLRKTLHLTVDDNVEIEPKDISYVHSFYAPLTARIVEHSLKPLGWQTLKSQINNLPGPTFEDFQAQLVGIGGRHTVTTVSEGSLLNVPRVVLVCFVGGCTFAEIAALRFLAAQEDNNVEFLIATTKVVNKHSFLDSLMSS</sequence>
<protein>
    <recommendedName>
        <fullName>Vacuolar protein sorting-associated protein 33A</fullName>
    </recommendedName>
    <alternativeName>
        <fullName>Protein carnation</fullName>
    </alternativeName>
</protein>
<organism evidence="15">
    <name type="scientific">Drosophila melanogaster</name>
    <name type="common">Fruit fly</name>
    <dbReference type="NCBI Taxonomy" id="7227"/>
    <lineage>
        <taxon>Eukaryota</taxon>
        <taxon>Metazoa</taxon>
        <taxon>Ecdysozoa</taxon>
        <taxon>Arthropoda</taxon>
        <taxon>Hexapoda</taxon>
        <taxon>Insecta</taxon>
        <taxon>Pterygota</taxon>
        <taxon>Neoptera</taxon>
        <taxon>Endopterygota</taxon>
        <taxon>Diptera</taxon>
        <taxon>Brachycera</taxon>
        <taxon>Muscomorpha</taxon>
        <taxon>Ephydroidea</taxon>
        <taxon>Drosophilidae</taxon>
        <taxon>Drosophila</taxon>
        <taxon>Sophophora</taxon>
    </lineage>
</organism>
<accession>Q9Y1I2</accession>
<comment type="function">
    <text evidence="2 4 5 6 7 11">Core component of the class C core vacuole/endosome tethering (CORVET) and the homotypic fusion and vacuole protein sorting (HOPS) tethering complexes involved in endo-lysosomal vesicle trafficking and lysosome biogenesis (PubMed:10549280, PubMed:22160599, PubMed:24554766, PubMed:27253064). The CORVET complex facilitates docking and fusion of endosomal vesicles during endosome maturation, acts upstream of HOPS, but is not involved in autophagic flux (PubMed:10549280, PubMed:27253064, PubMed:31194677). The CORVET complex may cooperate with the early endosomal tether Rbsn-5 to mediate endosomal fusion (PubMed:27253064). The HOPS complex facilitates docking and fusion of lysosomes with late endosomes and several other types of vesicles (PubMed:24554766, PubMed:31194677). The HOPS complex is also involved in autophagy and crinophagy (the elimination of unused secretory granules through their fusion with lysosomes) (PubMed:24554766, PubMed:31194677). The HOPS complex probably instigates autophagosome-lysosome fusion by binding autophagosome associated Syx17/syntaxin 17 and promoting assembly of the trans-SNARE complex (PubMed:24554766). Independent of Syx17/syntaxin 17 HOPS is involved in biosynthetic transport to lysosomes and lysosome-related organelles such as eye-pigment granules (PubMed:10549280, PubMed:24554766, PubMed:31194677). Required for endocytic degradation of boss/bride of sevenless and N/Notch in developing ommatidia (PubMed:24554766).</text>
</comment>
<comment type="subunit">
    <text evidence="2 3 5 6 7 8">Component of the class C core vacuole/endosome tethering (CORVET) complex composed of at least Vps8, dor/Vps18, car/Vps33A and Vps16A; unlike in other species, Vps11 is not part of the Drosophila complex (PubMed:10549280, PubMed:27253064). Due to the reduced number of components the Drosophila CORVET complex is often referred to as the miniCORVET complex (PubMed:27253064). Interacts with ema (PubMed:20194640). Component of the homotypic fusion and vacuole protein sorting (HOPS) complex, composed of Vps16A, car/Vps33A, dor/Vps18, Vps39, Vps11 and lt/Vps41 (PubMed:31194677). The tethering complex core made up of Vps16A, car/Vps33A and dor/Vps18 and shared by both HOPS and CORVET, preferentially associates with CORVET specific Vps8 over HOPS specific lt/Vps41 (PubMed:31194677). Interacts with Syx17 (via SNARE domain); the interaction requires Vps16A, may involve additional components of the HOPS complex and may promote assembly of the Syx17-Snap29-Vamp7 trans-SNARE complex (PubMed:24554766).</text>
</comment>
<comment type="subcellular location">
    <subcellularLocation>
        <location evidence="11">Early endosome</location>
    </subcellularLocation>
    <subcellularLocation>
        <location evidence="2">Late endosome membrane</location>
        <topology evidence="2">Peripheral membrane protein</topology>
        <orientation evidence="2">Cytoplasmic side</orientation>
    </subcellularLocation>
    <subcellularLocation>
        <location evidence="2">Lysosome membrane</location>
        <topology evidence="2">Peripheral membrane protein</topology>
        <orientation evidence="2">Cytoplasmic side</orientation>
    </subcellularLocation>
    <text>Cytoplasmic, peripheral membrane protein associated with late endosomes/lysosomes.</text>
</comment>
<comment type="developmental stage">
    <text evidence="6">Expressed in larva and adult (at protein level).</text>
</comment>
<comment type="disruption phenotype">
    <text evidence="2 5 6">Flies display impaired deposition of pigment granules (PubMed:10549280). Member of the 'granule group' of eye color genes as mutants affect deposition in pigment granules of two types of pigments, the ommochromes and drosopterins (PubMed:10549280). RNAi-mediated knockdown results in late endosome fragmentation (PubMed:27253064). RNAi-mediated knockdown causes impaired autophagosome clearance in fat body cells of starved or wandering 3rd instar (L3) larvae (PubMed:24554766).</text>
</comment>
<comment type="miscellaneous">
    <text evidence="10">The name 'carnation' was given due to the eye color phenotype caused by hypomorphic mutations in the car gene.</text>
</comment>
<comment type="similarity">
    <text evidence="9">Belongs to the STXBP/unc-18/SEC1 family.</text>
</comment>
<proteinExistence type="evidence at protein level"/>
<dbReference type="EMBL" id="AF133260">
    <property type="protein sequence ID" value="AAD38513.1"/>
    <property type="molecule type" value="mRNA"/>
</dbReference>
<dbReference type="EMBL" id="AE014298">
    <property type="protein sequence ID" value="AAF48972.1"/>
    <property type="molecule type" value="Genomic_DNA"/>
</dbReference>
<dbReference type="EMBL" id="AY069498">
    <property type="protein sequence ID" value="AAL39643.1"/>
    <property type="molecule type" value="mRNA"/>
</dbReference>
<dbReference type="RefSeq" id="NP_523410.1">
    <property type="nucleotide sequence ID" value="NM_078686.5"/>
</dbReference>
<dbReference type="RefSeq" id="NP_728266.1">
    <property type="nucleotide sequence ID" value="NM_167664.2"/>
</dbReference>
<dbReference type="SMR" id="Q9Y1I2"/>
<dbReference type="BioGRID" id="59247">
    <property type="interactions" value="16"/>
</dbReference>
<dbReference type="ComplexPortal" id="CPX-8877">
    <property type="entry name" value="CORVET tethering complex"/>
</dbReference>
<dbReference type="ComplexPortal" id="CPX-936">
    <property type="entry name" value="HOPS tethering complex"/>
</dbReference>
<dbReference type="FunCoup" id="Q9Y1I2">
    <property type="interactions" value="2180"/>
</dbReference>
<dbReference type="IntAct" id="Q9Y1I2">
    <property type="interactions" value="2"/>
</dbReference>
<dbReference type="STRING" id="7227.FBpp0303585"/>
<dbReference type="PaxDb" id="7227-FBpp0074496"/>
<dbReference type="DNASU" id="32947"/>
<dbReference type="EnsemblMetazoa" id="FBtr0074727">
    <property type="protein sequence ID" value="FBpp0074496"/>
    <property type="gene ID" value="FBgn0000257"/>
</dbReference>
<dbReference type="EnsemblMetazoa" id="FBtr0074728">
    <property type="protein sequence ID" value="FBpp0074497"/>
    <property type="gene ID" value="FBgn0000257"/>
</dbReference>
<dbReference type="GeneID" id="32947"/>
<dbReference type="KEGG" id="dme:Dmel_CG12230"/>
<dbReference type="AGR" id="FB:FBgn0000257"/>
<dbReference type="CTD" id="32947"/>
<dbReference type="FlyBase" id="FBgn0000257">
    <property type="gene designation" value="car"/>
</dbReference>
<dbReference type="VEuPathDB" id="VectorBase:FBgn0000257"/>
<dbReference type="eggNOG" id="KOG1302">
    <property type="taxonomic scope" value="Eukaryota"/>
</dbReference>
<dbReference type="GeneTree" id="ENSGT00940000155165"/>
<dbReference type="HOGENOM" id="CLU_016678_3_0_1"/>
<dbReference type="InParanoid" id="Q9Y1I2"/>
<dbReference type="OMA" id="EFHIFFV"/>
<dbReference type="OrthoDB" id="10262287at2759"/>
<dbReference type="PhylomeDB" id="Q9Y1I2"/>
<dbReference type="SignaLink" id="Q9Y1I2"/>
<dbReference type="BioGRID-ORCS" id="32947">
    <property type="hits" value="0 hits in 1 CRISPR screen"/>
</dbReference>
<dbReference type="GenomeRNAi" id="32947"/>
<dbReference type="PRO" id="PR:Q9Y1I2"/>
<dbReference type="Proteomes" id="UP000000803">
    <property type="component" value="Chromosome X"/>
</dbReference>
<dbReference type="Bgee" id="FBgn0000257">
    <property type="expression patterns" value="Expressed in spermatocyte cyst cell (Drosophila) in testis and 126 other cell types or tissues"/>
</dbReference>
<dbReference type="ExpressionAtlas" id="Q9Y1I2">
    <property type="expression patterns" value="baseline and differential"/>
</dbReference>
<dbReference type="GO" id="GO:0033263">
    <property type="term" value="C:CORVET complex"/>
    <property type="evidence" value="ECO:0000250"/>
    <property type="project" value="FlyBase"/>
</dbReference>
<dbReference type="GO" id="GO:0005829">
    <property type="term" value="C:cytosol"/>
    <property type="evidence" value="ECO:0000304"/>
    <property type="project" value="FlyBase"/>
</dbReference>
<dbReference type="GO" id="GO:0005769">
    <property type="term" value="C:early endosome"/>
    <property type="evidence" value="ECO:0007669"/>
    <property type="project" value="UniProtKB-SubCell"/>
</dbReference>
<dbReference type="GO" id="GO:0030897">
    <property type="term" value="C:HOPS complex"/>
    <property type="evidence" value="ECO:0000314"/>
    <property type="project" value="FlyBase"/>
</dbReference>
<dbReference type="GO" id="GO:0031902">
    <property type="term" value="C:late endosome membrane"/>
    <property type="evidence" value="ECO:0007669"/>
    <property type="project" value="UniProtKB-SubCell"/>
</dbReference>
<dbReference type="GO" id="GO:0005765">
    <property type="term" value="C:lysosomal membrane"/>
    <property type="evidence" value="ECO:0007669"/>
    <property type="project" value="UniProtKB-SubCell"/>
</dbReference>
<dbReference type="GO" id="GO:0005764">
    <property type="term" value="C:lysosome"/>
    <property type="evidence" value="ECO:0000314"/>
    <property type="project" value="UniProtKB"/>
</dbReference>
<dbReference type="GO" id="GO:0016020">
    <property type="term" value="C:membrane"/>
    <property type="evidence" value="ECO:0000304"/>
    <property type="project" value="FlyBase"/>
</dbReference>
<dbReference type="GO" id="GO:0000149">
    <property type="term" value="F:SNARE binding"/>
    <property type="evidence" value="ECO:0000250"/>
    <property type="project" value="FlyBase"/>
</dbReference>
<dbReference type="GO" id="GO:0019905">
    <property type="term" value="F:syntaxin binding"/>
    <property type="evidence" value="ECO:0000353"/>
    <property type="project" value="FlyBase"/>
</dbReference>
<dbReference type="GO" id="GO:0097352">
    <property type="term" value="P:autophagosome maturation"/>
    <property type="evidence" value="ECO:0000315"/>
    <property type="project" value="FlyBase"/>
</dbReference>
<dbReference type="GO" id="GO:0009267">
    <property type="term" value="P:cellular response to starvation"/>
    <property type="evidence" value="ECO:0000315"/>
    <property type="project" value="FlyBase"/>
</dbReference>
<dbReference type="GO" id="GO:0048072">
    <property type="term" value="P:compound eye pigmentation"/>
    <property type="evidence" value="ECO:0000315"/>
    <property type="project" value="FlyBase"/>
</dbReference>
<dbReference type="GO" id="GO:0160155">
    <property type="term" value="P:crinophagy"/>
    <property type="evidence" value="ECO:0000315"/>
    <property type="project" value="FlyBase"/>
</dbReference>
<dbReference type="GO" id="GO:0008340">
    <property type="term" value="P:determination of adult lifespan"/>
    <property type="evidence" value="ECO:0000315"/>
    <property type="project" value="FlyBase"/>
</dbReference>
<dbReference type="GO" id="GO:0006897">
    <property type="term" value="P:endocytosis"/>
    <property type="evidence" value="ECO:0000315"/>
    <property type="project" value="FlyBase"/>
</dbReference>
<dbReference type="GO" id="GO:0016197">
    <property type="term" value="P:endosomal transport"/>
    <property type="evidence" value="ECO:0000250"/>
    <property type="project" value="FlyBase"/>
</dbReference>
<dbReference type="GO" id="GO:0007032">
    <property type="term" value="P:endosome organization"/>
    <property type="evidence" value="ECO:0000315"/>
    <property type="project" value="FlyBase"/>
</dbReference>
<dbReference type="GO" id="GO:0008333">
    <property type="term" value="P:endosome to lysosome transport"/>
    <property type="evidence" value="ECO:0000315"/>
    <property type="project" value="FlyBase"/>
</dbReference>
<dbReference type="GO" id="GO:0008057">
    <property type="term" value="P:eye pigment granule organization"/>
    <property type="evidence" value="ECO:0000315"/>
    <property type="project" value="UniProtKB"/>
</dbReference>
<dbReference type="GO" id="GO:0006886">
    <property type="term" value="P:intracellular protein transport"/>
    <property type="evidence" value="ECO:0000318"/>
    <property type="project" value="GO_Central"/>
</dbReference>
<dbReference type="GO" id="GO:0046907">
    <property type="term" value="P:intracellular transport"/>
    <property type="evidence" value="ECO:0000304"/>
    <property type="project" value="FlyBase"/>
</dbReference>
<dbReference type="GO" id="GO:0007220">
    <property type="term" value="P:Notch receptor processing"/>
    <property type="evidence" value="ECO:0000315"/>
    <property type="project" value="FlyBase"/>
</dbReference>
<dbReference type="GO" id="GO:0006727">
    <property type="term" value="P:ommochrome biosynthetic process"/>
    <property type="evidence" value="ECO:0000315"/>
    <property type="project" value="FlyBase"/>
</dbReference>
<dbReference type="GO" id="GO:0006622">
    <property type="term" value="P:protein targeting to lysosome"/>
    <property type="evidence" value="ECO:0000315"/>
    <property type="project" value="UniProtKB"/>
</dbReference>
<dbReference type="GO" id="GO:0031396">
    <property type="term" value="P:regulation of protein ubiquitination"/>
    <property type="evidence" value="ECO:0000315"/>
    <property type="project" value="FlyBase"/>
</dbReference>
<dbReference type="GO" id="GO:0035542">
    <property type="term" value="P:regulation of SNARE complex assembly"/>
    <property type="evidence" value="ECO:0000250"/>
    <property type="project" value="FlyBase"/>
</dbReference>
<dbReference type="GO" id="GO:0016192">
    <property type="term" value="P:vesicle-mediated transport"/>
    <property type="evidence" value="ECO:0000250"/>
    <property type="project" value="FlyBase"/>
</dbReference>
<dbReference type="FunFam" id="1.25.40.850:FF:000004">
    <property type="entry name" value="Carnation, isoform B"/>
    <property type="match status" value="1"/>
</dbReference>
<dbReference type="FunFam" id="3.40.50.1910:FF:000018">
    <property type="entry name" value="Carnation, isoform C"/>
    <property type="match status" value="1"/>
</dbReference>
<dbReference type="FunFam" id="3.40.50.1910:FF:000019">
    <property type="entry name" value="Carnation, isoform C"/>
    <property type="match status" value="1"/>
</dbReference>
<dbReference type="FunFam" id="3.40.50.2060:FF:000015">
    <property type="entry name" value="Carnation, isoform C"/>
    <property type="match status" value="1"/>
</dbReference>
<dbReference type="Gene3D" id="1.25.40.850">
    <property type="match status" value="1"/>
</dbReference>
<dbReference type="Gene3D" id="3.40.50.1910">
    <property type="match status" value="2"/>
</dbReference>
<dbReference type="Gene3D" id="3.40.50.2060">
    <property type="match status" value="1"/>
</dbReference>
<dbReference type="InterPro" id="IPR043154">
    <property type="entry name" value="Sec-1-like_dom1"/>
</dbReference>
<dbReference type="InterPro" id="IPR001619">
    <property type="entry name" value="Sec1-like"/>
</dbReference>
<dbReference type="InterPro" id="IPR027482">
    <property type="entry name" value="Sec1-like_dom2"/>
</dbReference>
<dbReference type="InterPro" id="IPR036045">
    <property type="entry name" value="Sec1-like_sf"/>
</dbReference>
<dbReference type="InterPro" id="IPR043155">
    <property type="entry name" value="VPS33_dom3b"/>
</dbReference>
<dbReference type="PANTHER" id="PTHR11679">
    <property type="entry name" value="VESICLE PROTEIN SORTING-ASSOCIATED"/>
    <property type="match status" value="1"/>
</dbReference>
<dbReference type="Pfam" id="PF00995">
    <property type="entry name" value="Sec1"/>
    <property type="match status" value="1"/>
</dbReference>
<dbReference type="PIRSF" id="PIRSF005715">
    <property type="entry name" value="VPS45_Sec1"/>
    <property type="match status" value="1"/>
</dbReference>
<dbReference type="SUPFAM" id="SSF56815">
    <property type="entry name" value="Sec1/munc18-like (SM) proteins"/>
    <property type="match status" value="1"/>
</dbReference>
<keyword id="KW-0072">Autophagy</keyword>
<keyword id="KW-0967">Endosome</keyword>
<keyword id="KW-0458">Lysosome</keyword>
<keyword id="KW-0472">Membrane</keyword>
<keyword id="KW-0653">Protein transport</keyword>
<keyword id="KW-1185">Reference proteome</keyword>
<keyword id="KW-0813">Transport</keyword>
<name>VP33A_DROME</name>
<evidence type="ECO:0000256" key="1">
    <source>
        <dbReference type="SAM" id="MobiDB-lite"/>
    </source>
</evidence>
<evidence type="ECO:0000269" key="2">
    <source>
    </source>
</evidence>
<evidence type="ECO:0000269" key="3">
    <source>
    </source>
</evidence>
<evidence type="ECO:0000269" key="4">
    <source>
    </source>
</evidence>
<evidence type="ECO:0000269" key="5">
    <source>
    </source>
</evidence>
<evidence type="ECO:0000269" key="6">
    <source>
    </source>
</evidence>
<evidence type="ECO:0000269" key="7">
    <source>
    </source>
</evidence>
<evidence type="ECO:0000303" key="8">
    <source>
    </source>
</evidence>
<evidence type="ECO:0000305" key="9"/>
<evidence type="ECO:0000305" key="10">
    <source>
    </source>
</evidence>
<evidence type="ECO:0000305" key="11">
    <source>
    </source>
</evidence>
<evidence type="ECO:0000312" key="12">
    <source>
        <dbReference type="EMBL" id="AAD38513.1"/>
    </source>
</evidence>
<evidence type="ECO:0000312" key="13">
    <source>
        <dbReference type="EMBL" id="AAL39643.1"/>
    </source>
</evidence>
<evidence type="ECO:0000312" key="14">
    <source>
        <dbReference type="FlyBase" id="FBgn0000257"/>
    </source>
</evidence>
<evidence type="ECO:0000312" key="15">
    <source>
        <dbReference type="Proteomes" id="UP000000803"/>
    </source>
</evidence>